<dbReference type="EC" id="2.3.1.234" evidence="1"/>
<dbReference type="EMBL" id="LT708304">
    <property type="protein sequence ID" value="SIU02081.1"/>
    <property type="molecule type" value="Genomic_DNA"/>
</dbReference>
<dbReference type="RefSeq" id="NP_857093.1">
    <property type="nucleotide sequence ID" value="NC_002945.3"/>
</dbReference>
<dbReference type="RefSeq" id="WP_003900052.1">
    <property type="nucleotide sequence ID" value="NC_002945.4"/>
</dbReference>
<dbReference type="SMR" id="P65802"/>
<dbReference type="KEGG" id="mbo:BQ2027_MB3453C"/>
<dbReference type="PATRIC" id="fig|233413.5.peg.3788"/>
<dbReference type="Proteomes" id="UP000001419">
    <property type="component" value="Chromosome"/>
</dbReference>
<dbReference type="GO" id="GO:0005737">
    <property type="term" value="C:cytoplasm"/>
    <property type="evidence" value="ECO:0007669"/>
    <property type="project" value="UniProtKB-SubCell"/>
</dbReference>
<dbReference type="GO" id="GO:0005506">
    <property type="term" value="F:iron ion binding"/>
    <property type="evidence" value="ECO:0007669"/>
    <property type="project" value="UniProtKB-UniRule"/>
</dbReference>
<dbReference type="GO" id="GO:0061711">
    <property type="term" value="F:N(6)-L-threonylcarbamoyladenine synthase activity"/>
    <property type="evidence" value="ECO:0007669"/>
    <property type="project" value="UniProtKB-EC"/>
</dbReference>
<dbReference type="GO" id="GO:0002949">
    <property type="term" value="P:tRNA threonylcarbamoyladenosine modification"/>
    <property type="evidence" value="ECO:0007669"/>
    <property type="project" value="UniProtKB-UniRule"/>
</dbReference>
<dbReference type="CDD" id="cd24133">
    <property type="entry name" value="ASKHA_NBD_TsaD_bac"/>
    <property type="match status" value="1"/>
</dbReference>
<dbReference type="FunFam" id="3.30.420.40:FF:000012">
    <property type="entry name" value="tRNA N6-adenosine threonylcarbamoyltransferase"/>
    <property type="match status" value="1"/>
</dbReference>
<dbReference type="FunFam" id="3.30.420.40:FF:000040">
    <property type="entry name" value="tRNA N6-adenosine threonylcarbamoyltransferase"/>
    <property type="match status" value="1"/>
</dbReference>
<dbReference type="Gene3D" id="3.30.420.40">
    <property type="match status" value="2"/>
</dbReference>
<dbReference type="HAMAP" id="MF_01445">
    <property type="entry name" value="TsaD"/>
    <property type="match status" value="1"/>
</dbReference>
<dbReference type="InterPro" id="IPR043129">
    <property type="entry name" value="ATPase_NBD"/>
</dbReference>
<dbReference type="InterPro" id="IPR000905">
    <property type="entry name" value="Gcp-like_dom"/>
</dbReference>
<dbReference type="InterPro" id="IPR017861">
    <property type="entry name" value="KAE1/TsaD"/>
</dbReference>
<dbReference type="InterPro" id="IPR017860">
    <property type="entry name" value="Peptidase_M22_CS"/>
</dbReference>
<dbReference type="InterPro" id="IPR022450">
    <property type="entry name" value="TsaD"/>
</dbReference>
<dbReference type="NCBIfam" id="TIGR00329">
    <property type="entry name" value="gcp_kae1"/>
    <property type="match status" value="1"/>
</dbReference>
<dbReference type="NCBIfam" id="TIGR03723">
    <property type="entry name" value="T6A_TsaD_YgjD"/>
    <property type="match status" value="1"/>
</dbReference>
<dbReference type="PANTHER" id="PTHR11735">
    <property type="entry name" value="TRNA N6-ADENOSINE THREONYLCARBAMOYLTRANSFERASE"/>
    <property type="match status" value="1"/>
</dbReference>
<dbReference type="PANTHER" id="PTHR11735:SF6">
    <property type="entry name" value="TRNA N6-ADENOSINE THREONYLCARBAMOYLTRANSFERASE, MITOCHONDRIAL"/>
    <property type="match status" value="1"/>
</dbReference>
<dbReference type="Pfam" id="PF00814">
    <property type="entry name" value="TsaD"/>
    <property type="match status" value="1"/>
</dbReference>
<dbReference type="PRINTS" id="PR00789">
    <property type="entry name" value="OSIALOPTASE"/>
</dbReference>
<dbReference type="SUPFAM" id="SSF53067">
    <property type="entry name" value="Actin-like ATPase domain"/>
    <property type="match status" value="2"/>
</dbReference>
<dbReference type="PROSITE" id="PS01016">
    <property type="entry name" value="GLYCOPROTEASE"/>
    <property type="match status" value="1"/>
</dbReference>
<protein>
    <recommendedName>
        <fullName evidence="1">tRNA N6-adenosine threonylcarbamoyltransferase</fullName>
        <ecNumber evidence="1">2.3.1.234</ecNumber>
    </recommendedName>
    <alternativeName>
        <fullName evidence="1">N6-L-threonylcarbamoyladenine synthase</fullName>
        <shortName evidence="1">t(6)A synthase</shortName>
    </alternativeName>
    <alternativeName>
        <fullName evidence="1">t(6)A37 threonylcarbamoyladenosine biosynthesis protein TsaD</fullName>
    </alternativeName>
    <alternativeName>
        <fullName evidence="1">tRNA threonylcarbamoyladenosine biosynthesis protein TsaD</fullName>
    </alternativeName>
</protein>
<gene>
    <name evidence="1" type="primary">tsaD</name>
    <name type="synonym">gcp</name>
    <name type="ordered locus">BQ2027_MB3453C</name>
</gene>
<proteinExistence type="inferred from homology"/>
<sequence length="344" mass="35091">MTTVLGIETSCDETGVGIARLDPDGTVTLLADEVASSVDEHVRFGGVVPEIASRAHLEALGPAMRRALAAAGLKQPDIVAATIGPGLAGALLVGVAAAKAYSAAWGVPFYAVNHLGGHLAADVYEHGPLPECVALLVSGGHTHLLHVRSLGEPIIELGSTVDDAAGEAYDKVARLLGLGYPGGKALDDLARTGDRDAIVFPRGMSGPADDRYAFSFSGLKTAVARYVESHAADPGFRTADIAAGFQEAVADVLTMKAVRAATALGVSTLLIAGGVAANSRLRELATQRCGEAGRTLRIPSPRLCTDNGAMIAAFAAQLVAAGAPPSPLDVPSDPGLPVMQGQVR</sequence>
<accession>P65802</accession>
<accession>A0A1R3Y450</accession>
<accession>Q50709</accession>
<accession>X2BNE0</accession>
<evidence type="ECO:0000255" key="1">
    <source>
        <dbReference type="HAMAP-Rule" id="MF_01445"/>
    </source>
</evidence>
<evidence type="ECO:0000256" key="2">
    <source>
        <dbReference type="SAM" id="MobiDB-lite"/>
    </source>
</evidence>
<feature type="chain" id="PRO_0000096971" description="tRNA N6-adenosine threonylcarbamoyltransferase">
    <location>
        <begin position="1"/>
        <end position="344"/>
    </location>
</feature>
<feature type="region of interest" description="Disordered" evidence="2">
    <location>
        <begin position="325"/>
        <end position="344"/>
    </location>
</feature>
<feature type="binding site" evidence="1">
    <location>
        <position position="114"/>
    </location>
    <ligand>
        <name>Fe cation</name>
        <dbReference type="ChEBI" id="CHEBI:24875"/>
    </ligand>
</feature>
<feature type="binding site" evidence="1">
    <location>
        <position position="118"/>
    </location>
    <ligand>
        <name>Fe cation</name>
        <dbReference type="ChEBI" id="CHEBI:24875"/>
    </ligand>
</feature>
<feature type="binding site" evidence="1">
    <location>
        <begin position="136"/>
        <end position="140"/>
    </location>
    <ligand>
        <name>substrate</name>
    </ligand>
</feature>
<feature type="binding site" evidence="1">
    <location>
        <position position="170"/>
    </location>
    <ligand>
        <name>substrate</name>
    </ligand>
</feature>
<feature type="binding site" evidence="1">
    <location>
        <position position="183"/>
    </location>
    <ligand>
        <name>substrate</name>
    </ligand>
</feature>
<feature type="binding site" evidence="1">
    <location>
        <position position="187"/>
    </location>
    <ligand>
        <name>substrate</name>
    </ligand>
</feature>
<feature type="binding site" evidence="1">
    <location>
        <position position="278"/>
    </location>
    <ligand>
        <name>substrate</name>
    </ligand>
</feature>
<feature type="binding site" evidence="1">
    <location>
        <position position="306"/>
    </location>
    <ligand>
        <name>Fe cation</name>
        <dbReference type="ChEBI" id="CHEBI:24875"/>
    </ligand>
</feature>
<organism>
    <name type="scientific">Mycobacterium bovis (strain ATCC BAA-935 / AF2122/97)</name>
    <dbReference type="NCBI Taxonomy" id="233413"/>
    <lineage>
        <taxon>Bacteria</taxon>
        <taxon>Bacillati</taxon>
        <taxon>Actinomycetota</taxon>
        <taxon>Actinomycetes</taxon>
        <taxon>Mycobacteriales</taxon>
        <taxon>Mycobacteriaceae</taxon>
        <taxon>Mycobacterium</taxon>
        <taxon>Mycobacterium tuberculosis complex</taxon>
    </lineage>
</organism>
<comment type="function">
    <text evidence="1">Required for the formation of a threonylcarbamoyl group on adenosine at position 37 (t(6)A37) in tRNAs that read codons beginning with adenine. Is involved in the transfer of the threonylcarbamoyl moiety of threonylcarbamoyl-AMP (TC-AMP) to the N6 group of A37, together with TsaE and TsaB. TsaD likely plays a direct catalytic role in this reaction.</text>
</comment>
<comment type="catalytic activity">
    <reaction evidence="1">
        <text>L-threonylcarbamoyladenylate + adenosine(37) in tRNA = N(6)-L-threonylcarbamoyladenosine(37) in tRNA + AMP + H(+)</text>
        <dbReference type="Rhea" id="RHEA:37059"/>
        <dbReference type="Rhea" id="RHEA-COMP:10162"/>
        <dbReference type="Rhea" id="RHEA-COMP:10163"/>
        <dbReference type="ChEBI" id="CHEBI:15378"/>
        <dbReference type="ChEBI" id="CHEBI:73682"/>
        <dbReference type="ChEBI" id="CHEBI:74411"/>
        <dbReference type="ChEBI" id="CHEBI:74418"/>
        <dbReference type="ChEBI" id="CHEBI:456215"/>
        <dbReference type="EC" id="2.3.1.234"/>
    </reaction>
</comment>
<comment type="cofactor">
    <cofactor evidence="1">
        <name>Fe(2+)</name>
        <dbReference type="ChEBI" id="CHEBI:29033"/>
    </cofactor>
    <text evidence="1">Binds 1 Fe(2+) ion per subunit.</text>
</comment>
<comment type="subcellular location">
    <subcellularLocation>
        <location evidence="1">Cytoplasm</location>
    </subcellularLocation>
</comment>
<comment type="similarity">
    <text evidence="1">Belongs to the KAE1 / TsaD family.</text>
</comment>
<reference key="1">
    <citation type="journal article" date="2003" name="Proc. Natl. Acad. Sci. U.S.A.">
        <title>The complete genome sequence of Mycobacterium bovis.</title>
        <authorList>
            <person name="Garnier T."/>
            <person name="Eiglmeier K."/>
            <person name="Camus J.-C."/>
            <person name="Medina N."/>
            <person name="Mansoor H."/>
            <person name="Pryor M."/>
            <person name="Duthoy S."/>
            <person name="Grondin S."/>
            <person name="Lacroix C."/>
            <person name="Monsempe C."/>
            <person name="Simon S."/>
            <person name="Harris B."/>
            <person name="Atkin R."/>
            <person name="Doggett J."/>
            <person name="Mayes R."/>
            <person name="Keating L."/>
            <person name="Wheeler P.R."/>
            <person name="Parkhill J."/>
            <person name="Barrell B.G."/>
            <person name="Cole S.T."/>
            <person name="Gordon S.V."/>
            <person name="Hewinson R.G."/>
        </authorList>
    </citation>
    <scope>NUCLEOTIDE SEQUENCE [LARGE SCALE GENOMIC DNA]</scope>
    <source>
        <strain>ATCC BAA-935 / AF2122/97</strain>
    </source>
</reference>
<reference key="2">
    <citation type="journal article" date="2017" name="Genome Announc.">
        <title>Updated reference genome sequence and annotation of Mycobacterium bovis AF2122/97.</title>
        <authorList>
            <person name="Malone K.M."/>
            <person name="Farrell D."/>
            <person name="Stuber T.P."/>
            <person name="Schubert O.T."/>
            <person name="Aebersold R."/>
            <person name="Robbe-Austerman S."/>
            <person name="Gordon S.V."/>
        </authorList>
    </citation>
    <scope>NUCLEOTIDE SEQUENCE [LARGE SCALE GENOMIC DNA]</scope>
    <scope>GENOME REANNOTATION</scope>
    <source>
        <strain>ATCC BAA-935 / AF2122/97</strain>
    </source>
</reference>
<keyword id="KW-0012">Acyltransferase</keyword>
<keyword id="KW-0963">Cytoplasm</keyword>
<keyword id="KW-0408">Iron</keyword>
<keyword id="KW-0479">Metal-binding</keyword>
<keyword id="KW-1185">Reference proteome</keyword>
<keyword id="KW-0808">Transferase</keyword>
<keyword id="KW-0819">tRNA processing</keyword>
<name>TSAD_MYCBO</name>